<keyword id="KW-0963">Cytoplasm</keyword>
<keyword id="KW-0342">GTP-binding</keyword>
<keyword id="KW-0378">Hydrolase</keyword>
<keyword id="KW-0460">Magnesium</keyword>
<keyword id="KW-0479">Metal-binding</keyword>
<keyword id="KW-0547">Nucleotide-binding</keyword>
<keyword id="KW-0630">Potassium</keyword>
<keyword id="KW-0819">tRNA processing</keyword>
<organism>
    <name type="scientific">Brucella ovis (strain ATCC 25840 / 63/290 / NCTC 10512)</name>
    <dbReference type="NCBI Taxonomy" id="444178"/>
    <lineage>
        <taxon>Bacteria</taxon>
        <taxon>Pseudomonadati</taxon>
        <taxon>Pseudomonadota</taxon>
        <taxon>Alphaproteobacteria</taxon>
        <taxon>Hyphomicrobiales</taxon>
        <taxon>Brucellaceae</taxon>
        <taxon>Brucella/Ochrobactrum group</taxon>
        <taxon>Brucella</taxon>
    </lineage>
</organism>
<feature type="chain" id="PRO_0000345731" description="tRNA modification GTPase MnmE">
    <location>
        <begin position="1"/>
        <end position="442"/>
    </location>
</feature>
<feature type="domain" description="TrmE-type G">
    <location>
        <begin position="221"/>
        <end position="366"/>
    </location>
</feature>
<feature type="binding site" evidence="1">
    <location>
        <position position="27"/>
    </location>
    <ligand>
        <name>(6S)-5-formyl-5,6,7,8-tetrahydrofolate</name>
        <dbReference type="ChEBI" id="CHEBI:57457"/>
    </ligand>
</feature>
<feature type="binding site" evidence="1">
    <location>
        <position position="84"/>
    </location>
    <ligand>
        <name>(6S)-5-formyl-5,6,7,8-tetrahydrofolate</name>
        <dbReference type="ChEBI" id="CHEBI:57457"/>
    </ligand>
</feature>
<feature type="binding site" evidence="1">
    <location>
        <position position="124"/>
    </location>
    <ligand>
        <name>(6S)-5-formyl-5,6,7,8-tetrahydrofolate</name>
        <dbReference type="ChEBI" id="CHEBI:57457"/>
    </ligand>
</feature>
<feature type="binding site" evidence="1">
    <location>
        <begin position="231"/>
        <end position="236"/>
    </location>
    <ligand>
        <name>GTP</name>
        <dbReference type="ChEBI" id="CHEBI:37565"/>
    </ligand>
</feature>
<feature type="binding site" evidence="1">
    <location>
        <position position="235"/>
    </location>
    <ligand>
        <name>Mg(2+)</name>
        <dbReference type="ChEBI" id="CHEBI:18420"/>
    </ligand>
</feature>
<feature type="binding site" evidence="1">
    <location>
        <begin position="250"/>
        <end position="256"/>
    </location>
    <ligand>
        <name>GTP</name>
        <dbReference type="ChEBI" id="CHEBI:37565"/>
    </ligand>
</feature>
<feature type="binding site" evidence="1">
    <location>
        <position position="256"/>
    </location>
    <ligand>
        <name>Mg(2+)</name>
        <dbReference type="ChEBI" id="CHEBI:18420"/>
    </ligand>
</feature>
<feature type="binding site" evidence="1">
    <location>
        <begin position="275"/>
        <end position="278"/>
    </location>
    <ligand>
        <name>GTP</name>
        <dbReference type="ChEBI" id="CHEBI:37565"/>
    </ligand>
</feature>
<feature type="binding site" evidence="1">
    <location>
        <position position="442"/>
    </location>
    <ligand>
        <name>(6S)-5-formyl-5,6,7,8-tetrahydrofolate</name>
        <dbReference type="ChEBI" id="CHEBI:57457"/>
    </ligand>
</feature>
<gene>
    <name evidence="1" type="primary">mnmE</name>
    <name evidence="1" type="synonym">trmE</name>
    <name type="ordered locus">BOV_1982</name>
</gene>
<protein>
    <recommendedName>
        <fullName evidence="1">tRNA modification GTPase MnmE</fullName>
        <ecNumber evidence="1">3.6.-.-</ecNumber>
    </recommendedName>
</protein>
<proteinExistence type="inferred from homology"/>
<sequence length="442" mass="48138">MSEIGSYHDTIFALSSGRLPSGVAVIRISGPKTRFVYETIRQAIPEPRHAALLTFRSRNGDAIDRGLTLFFPAPHSFTGEDCAEFHLHGGKAVVEKMLAVLGELPGCRIAEAGEFTRRAFANGKMDLTIAEGLADLIAAETEGQRRLAMQVASGNQRKLYSEWRQRLINARAFIEAELDFADESDVPGSVSMQVWQQLSALKHEIEHHIASGKRAAMLRDGLHVVIVGAPNAGKSSLLNFLAGRDVAIISEEAGTTRDLLEVKLDLGGIPVYVTDTAGLRETDSVVEKIGIERARARMAEADLVLSLEDMSGPVSVTVEKIEAETWLIGTKADLGGSASGLWKYHISTMTGSGLEQLLDALQAFAEAKIGQIEDAVPTRQRHINLLRATIEEIEKAIEGDDLPLELRAENMRLASQFLGRITGDVDVEEILDVIFSQFCIGK</sequence>
<reference key="1">
    <citation type="journal article" date="2009" name="PLoS ONE">
        <title>Genome degradation in Brucella ovis corresponds with narrowing of its host range and tissue tropism.</title>
        <authorList>
            <person name="Tsolis R.M."/>
            <person name="Seshadri R."/>
            <person name="Santos R.L."/>
            <person name="Sangari F.J."/>
            <person name="Lobo J.M."/>
            <person name="de Jong M.F."/>
            <person name="Ren Q."/>
            <person name="Myers G."/>
            <person name="Brinkac L.M."/>
            <person name="Nelson W.C."/>
            <person name="Deboy R.T."/>
            <person name="Angiuoli S."/>
            <person name="Khouri H."/>
            <person name="Dimitrov G."/>
            <person name="Robinson J.R."/>
            <person name="Mulligan S."/>
            <person name="Walker R.L."/>
            <person name="Elzer P.E."/>
            <person name="Hassan K.A."/>
            <person name="Paulsen I.T."/>
        </authorList>
    </citation>
    <scope>NUCLEOTIDE SEQUENCE [LARGE SCALE GENOMIC DNA]</scope>
    <source>
        <strain>ATCC 25840 / 63/290 / NCTC 10512</strain>
    </source>
</reference>
<comment type="function">
    <text evidence="1">Exhibits a very high intrinsic GTPase hydrolysis rate. Involved in the addition of a carboxymethylaminomethyl (cmnm) group at the wobble position (U34) of certain tRNAs, forming tRNA-cmnm(5)s(2)U34.</text>
</comment>
<comment type="cofactor">
    <cofactor evidence="1">
        <name>K(+)</name>
        <dbReference type="ChEBI" id="CHEBI:29103"/>
    </cofactor>
    <text evidence="1">Binds 1 potassium ion per subunit.</text>
</comment>
<comment type="subunit">
    <text evidence="1">Homodimer. Heterotetramer of two MnmE and two MnmG subunits.</text>
</comment>
<comment type="subcellular location">
    <subcellularLocation>
        <location evidence="1">Cytoplasm</location>
    </subcellularLocation>
</comment>
<comment type="similarity">
    <text evidence="1">Belongs to the TRAFAC class TrmE-Era-EngA-EngB-Septin-like GTPase superfamily. TrmE GTPase family.</text>
</comment>
<evidence type="ECO:0000255" key="1">
    <source>
        <dbReference type="HAMAP-Rule" id="MF_00379"/>
    </source>
</evidence>
<dbReference type="EC" id="3.6.-.-" evidence="1"/>
<dbReference type="EMBL" id="CP000708">
    <property type="protein sequence ID" value="ABQ61045.1"/>
    <property type="molecule type" value="Genomic_DNA"/>
</dbReference>
<dbReference type="RefSeq" id="WP_006014444.1">
    <property type="nucleotide sequence ID" value="NC_009505.1"/>
</dbReference>
<dbReference type="SMR" id="A5VT20"/>
<dbReference type="GeneID" id="45125316"/>
<dbReference type="KEGG" id="bov:BOV_1982"/>
<dbReference type="HOGENOM" id="CLU_019624_3_1_5"/>
<dbReference type="PhylomeDB" id="A5VT20"/>
<dbReference type="Proteomes" id="UP000006383">
    <property type="component" value="Chromosome I"/>
</dbReference>
<dbReference type="GO" id="GO:0005737">
    <property type="term" value="C:cytoplasm"/>
    <property type="evidence" value="ECO:0007669"/>
    <property type="project" value="UniProtKB-SubCell"/>
</dbReference>
<dbReference type="GO" id="GO:0005525">
    <property type="term" value="F:GTP binding"/>
    <property type="evidence" value="ECO:0007669"/>
    <property type="project" value="UniProtKB-UniRule"/>
</dbReference>
<dbReference type="GO" id="GO:0003924">
    <property type="term" value="F:GTPase activity"/>
    <property type="evidence" value="ECO:0007669"/>
    <property type="project" value="UniProtKB-UniRule"/>
</dbReference>
<dbReference type="GO" id="GO:0046872">
    <property type="term" value="F:metal ion binding"/>
    <property type="evidence" value="ECO:0007669"/>
    <property type="project" value="UniProtKB-KW"/>
</dbReference>
<dbReference type="GO" id="GO:0030488">
    <property type="term" value="P:tRNA methylation"/>
    <property type="evidence" value="ECO:0007669"/>
    <property type="project" value="TreeGrafter"/>
</dbReference>
<dbReference type="GO" id="GO:0002098">
    <property type="term" value="P:tRNA wobble uridine modification"/>
    <property type="evidence" value="ECO:0007669"/>
    <property type="project" value="TreeGrafter"/>
</dbReference>
<dbReference type="CDD" id="cd04164">
    <property type="entry name" value="trmE"/>
    <property type="match status" value="1"/>
</dbReference>
<dbReference type="CDD" id="cd14858">
    <property type="entry name" value="TrmE_N"/>
    <property type="match status" value="1"/>
</dbReference>
<dbReference type="FunFam" id="3.30.1360.120:FF:000007">
    <property type="entry name" value="tRNA modification GTPase GTPBP3, mitochondrial"/>
    <property type="match status" value="1"/>
</dbReference>
<dbReference type="Gene3D" id="3.40.50.300">
    <property type="entry name" value="P-loop containing nucleotide triphosphate hydrolases"/>
    <property type="match status" value="1"/>
</dbReference>
<dbReference type="Gene3D" id="3.30.1360.120">
    <property type="entry name" value="Probable tRNA modification gtpase trme, domain 1"/>
    <property type="match status" value="1"/>
</dbReference>
<dbReference type="Gene3D" id="1.20.120.430">
    <property type="entry name" value="tRNA modification GTPase MnmE domain 2"/>
    <property type="match status" value="1"/>
</dbReference>
<dbReference type="HAMAP" id="MF_00379">
    <property type="entry name" value="GTPase_MnmE"/>
    <property type="match status" value="1"/>
</dbReference>
<dbReference type="InterPro" id="IPR031168">
    <property type="entry name" value="G_TrmE"/>
</dbReference>
<dbReference type="InterPro" id="IPR006073">
    <property type="entry name" value="GTP-bd"/>
</dbReference>
<dbReference type="InterPro" id="IPR018948">
    <property type="entry name" value="GTP-bd_TrmE_N"/>
</dbReference>
<dbReference type="InterPro" id="IPR004520">
    <property type="entry name" value="GTPase_MnmE"/>
</dbReference>
<dbReference type="InterPro" id="IPR027368">
    <property type="entry name" value="MnmE_dom2"/>
</dbReference>
<dbReference type="InterPro" id="IPR025867">
    <property type="entry name" value="MnmE_helical"/>
</dbReference>
<dbReference type="InterPro" id="IPR027417">
    <property type="entry name" value="P-loop_NTPase"/>
</dbReference>
<dbReference type="InterPro" id="IPR005225">
    <property type="entry name" value="Small_GTP-bd"/>
</dbReference>
<dbReference type="InterPro" id="IPR027266">
    <property type="entry name" value="TrmE/GcvT_dom1"/>
</dbReference>
<dbReference type="NCBIfam" id="TIGR00450">
    <property type="entry name" value="mnmE_trmE_thdF"/>
    <property type="match status" value="1"/>
</dbReference>
<dbReference type="NCBIfam" id="NF003661">
    <property type="entry name" value="PRK05291.1-3"/>
    <property type="match status" value="1"/>
</dbReference>
<dbReference type="NCBIfam" id="TIGR00231">
    <property type="entry name" value="small_GTP"/>
    <property type="match status" value="1"/>
</dbReference>
<dbReference type="PANTHER" id="PTHR42714">
    <property type="entry name" value="TRNA MODIFICATION GTPASE GTPBP3"/>
    <property type="match status" value="1"/>
</dbReference>
<dbReference type="PANTHER" id="PTHR42714:SF2">
    <property type="entry name" value="TRNA MODIFICATION GTPASE GTPBP3, MITOCHONDRIAL"/>
    <property type="match status" value="1"/>
</dbReference>
<dbReference type="Pfam" id="PF01926">
    <property type="entry name" value="MMR_HSR1"/>
    <property type="match status" value="1"/>
</dbReference>
<dbReference type="Pfam" id="PF12631">
    <property type="entry name" value="MnmE_helical"/>
    <property type="match status" value="1"/>
</dbReference>
<dbReference type="Pfam" id="PF10396">
    <property type="entry name" value="TrmE_N"/>
    <property type="match status" value="1"/>
</dbReference>
<dbReference type="SUPFAM" id="SSF52540">
    <property type="entry name" value="P-loop containing nucleoside triphosphate hydrolases"/>
    <property type="match status" value="1"/>
</dbReference>
<dbReference type="SUPFAM" id="SSF116878">
    <property type="entry name" value="TrmE connector domain"/>
    <property type="match status" value="1"/>
</dbReference>
<dbReference type="PROSITE" id="PS51709">
    <property type="entry name" value="G_TRME"/>
    <property type="match status" value="1"/>
</dbReference>
<name>MNME_BRUO2</name>
<accession>A5VT20</accession>